<keyword id="KW-0002">3D-structure</keyword>
<keyword id="KW-0064">Aspartyl protease</keyword>
<keyword id="KW-0106">Calcium</keyword>
<keyword id="KW-0167">Capsid protein</keyword>
<keyword id="KW-1015">Disulfide bond</keyword>
<keyword id="KW-0378">Hydrolase</keyword>
<keyword id="KW-0479">Metal-binding</keyword>
<keyword id="KW-0645">Protease</keyword>
<keyword id="KW-1142">T=3 icosahedral capsid protein</keyword>
<keyword id="KW-0946">Virion</keyword>
<protein>
    <recommendedName>
        <fullName>Capsid protein alpha</fullName>
        <ecNumber evidence="2">3.4.23.44</ecNumber>
    </recommendedName>
    <component>
        <recommendedName>
            <fullName>Capsid protein beta</fullName>
        </recommendedName>
        <alternativeName>
            <fullName>Coat protein beta</fullName>
        </alternativeName>
        <alternativeName>
            <fullName>Nodavirus endopeptidase</fullName>
        </alternativeName>
    </component>
    <component>
        <recommendedName>
            <fullName>Membrane-lytic peptide gamma</fullName>
        </recommendedName>
        <alternativeName>
            <fullName>Coat protein gamma</fullName>
        </alternativeName>
    </component>
</protein>
<organismHost>
    <name type="scientific">Heteronychus arator</name>
    <name type="common">African black beetle</name>
    <dbReference type="NCBI Taxonomy" id="295550"/>
</organismHost>
<dbReference type="EC" id="3.4.23.44" evidence="2"/>
<dbReference type="EMBL" id="X00956">
    <property type="protein sequence ID" value="CAA25468.1"/>
    <property type="molecule type" value="Genomic_RNA"/>
</dbReference>
<dbReference type="PIR" id="A04151">
    <property type="entry name" value="VCBB2G"/>
</dbReference>
<dbReference type="RefSeq" id="NP_049329.1">
    <property type="nucleotide sequence ID" value="NC_002037.1"/>
</dbReference>
<dbReference type="PDB" id="2BBV">
    <property type="method" value="X-ray"/>
    <property type="resolution" value="2.80 A"/>
    <property type="chains" value="A/B/C=1-363, D/E/F=364-407"/>
</dbReference>
<dbReference type="PDBsum" id="2BBV"/>
<dbReference type="SMR" id="P04329"/>
<dbReference type="MEROPS" id="N01.001"/>
<dbReference type="KEGG" id="vg:956653"/>
<dbReference type="OrthoDB" id="10195at10239"/>
<dbReference type="EvolutionaryTrace" id="P04329"/>
<dbReference type="Proteomes" id="UP000203003">
    <property type="component" value="Genome"/>
</dbReference>
<dbReference type="GO" id="GO:0039617">
    <property type="term" value="C:T=3 icosahedral viral capsid"/>
    <property type="evidence" value="ECO:0007669"/>
    <property type="project" value="UniProtKB-KW"/>
</dbReference>
<dbReference type="GO" id="GO:0004190">
    <property type="term" value="F:aspartic-type endopeptidase activity"/>
    <property type="evidence" value="ECO:0007669"/>
    <property type="project" value="UniProtKB-KW"/>
</dbReference>
<dbReference type="GO" id="GO:0046872">
    <property type="term" value="F:metal ion binding"/>
    <property type="evidence" value="ECO:0007669"/>
    <property type="project" value="UniProtKB-KW"/>
</dbReference>
<dbReference type="GO" id="GO:0006508">
    <property type="term" value="P:proteolysis"/>
    <property type="evidence" value="ECO:0007669"/>
    <property type="project" value="UniProtKB-KW"/>
</dbReference>
<dbReference type="Gene3D" id="2.60.120.20">
    <property type="match status" value="1"/>
</dbReference>
<dbReference type="InterPro" id="IPR000696">
    <property type="entry name" value="Peptidase_A6"/>
</dbReference>
<dbReference type="InterPro" id="IPR029053">
    <property type="entry name" value="Viral_coat"/>
</dbReference>
<dbReference type="Pfam" id="PF01829">
    <property type="entry name" value="Peptidase_A6"/>
    <property type="match status" value="1"/>
</dbReference>
<dbReference type="PRINTS" id="PR00863">
    <property type="entry name" value="NODAVIRPTASE"/>
</dbReference>
<dbReference type="SUPFAM" id="SSF88633">
    <property type="entry name" value="Positive stranded ssRNA viruses"/>
    <property type="match status" value="1"/>
</dbReference>
<accession>P04329</accession>
<gene>
    <name type="primary">alpha</name>
</gene>
<organism>
    <name type="scientific">Black beetle virus</name>
    <name type="common">BBV</name>
    <dbReference type="NCBI Taxonomy" id="12285"/>
    <lineage>
        <taxon>Viruses</taxon>
        <taxon>Riboviria</taxon>
        <taxon>Orthornavirae</taxon>
        <taxon>Kitrinoviricota</taxon>
        <taxon>Magsaviricetes</taxon>
        <taxon>Nodamuvirales</taxon>
        <taxon>Nodaviridae</taxon>
        <taxon>Alphanodavirus</taxon>
    </lineage>
</organism>
<name>CAPSD_BBV</name>
<reference key="1">
    <citation type="journal article" date="1984" name="Nucleic Acids Res.">
        <title>Primary and secondary structure of black beetle virus RNA2, the genomic messenger for BBV coat protein precursor.</title>
        <authorList>
            <person name="Dasgupta R."/>
            <person name="Ghosh A."/>
            <person name="Dasmahapatra B."/>
            <person name="Guarino L.A."/>
            <person name="Kaesberg P."/>
        </authorList>
    </citation>
    <scope>NUCLEOTIDE SEQUENCE [GENOMIC RNA]</scope>
</reference>
<reference key="2">
    <citation type="journal article" date="1990" name="J. Mol. Biol.">
        <title>Structural homology among four nodaviruses as deduced by sequencing and X-ray crystallography.</title>
        <authorList>
            <person name="Kaesberg P."/>
            <person name="Dasgupta R."/>
            <person name="Sgro J.-Y."/>
            <person name="Wery J.-P."/>
            <person name="Selling B.H."/>
            <person name="Hosur M.V."/>
            <person name="Johnson J.E."/>
        </authorList>
    </citation>
    <scope>CRYSTALLIZATION</scope>
    <scope>SIMILARITY TO OTHER NODAVIRUSES</scope>
</reference>
<reference key="3">
    <citation type="journal article" date="1994" name="J. Mol. Biol.">
        <title>The refined three-dimensional structure of an insect virus at 2.8-A resolution.</title>
        <authorList>
            <person name="Wery J.-P."/>
            <person name="Reddy V.S."/>
            <person name="Hosur M.V."/>
            <person name="Johnson J.E."/>
        </authorList>
    </citation>
    <scope>X-RAY CRYSTALLOGRAPHY (2.8 ANGSTROMS)</scope>
</reference>
<evidence type="ECO:0000250" key="1"/>
<evidence type="ECO:0000250" key="2">
    <source>
        <dbReference type="UniProtKB" id="P12870"/>
    </source>
</evidence>
<evidence type="ECO:0000256" key="3">
    <source>
        <dbReference type="SAM" id="MobiDB-lite"/>
    </source>
</evidence>
<evidence type="ECO:0000305" key="4"/>
<evidence type="ECO:0007829" key="5">
    <source>
        <dbReference type="PDB" id="2BBV"/>
    </source>
</evidence>
<sequence length="407" mass="43838">MVRNNNRRRQRTQRIVTTTTQTAPVPQQNVPKQPRRRRNRARRNRRQGRAMNMGALTRLSQPGLAFLKCAFAPPDFNTDPGKGIPDRFEGKVVTRKDVLNQSINFTANRDTFILIAPTPGVAYWVADVPAGTFPISTTTFNAVNFPGFNSMFGNAAASRSDQVSSFRYASMNVGIYPTSNLMQFAGSITVWKCPVKLSNVQFPVATTPATSALVHTLVGLDGVLAVGPDNFSESFIKGVFSQSVCNEPDFEFSDILEGIQTLPPANVTVATSGQPFNLAAGAEAVSGIVGWGNMDTIVIRVSAPTGAVNSAILKTWACLEYRPNPNAMLYQFGHDSPPCDEVALQEYRTVARSLPVAVIAAQNASMWERVKSIIKSSLAMASNVPGPIGIAASGLSGLSALFEGFGF</sequence>
<comment type="function">
    <molecule>Capsid protein alpha</molecule>
    <text evidence="2">Capsid protein alpha self-assembles to form an icosahedral procapsid with a T=3 symmetry, about 30 nm in diameter, and consisting of 60 capsid proteins trimers. In addition, 240 calcium ions are incorporated per capsid during assembly. The capsid encapsulates the two genomic RNAs. Capsid maturation occurs via autoproteolytic cleavage of capsid protein alpha generating capsid protein beta and the membrane-active peptide gamma.</text>
</comment>
<comment type="function">
    <molecule>Membrane-lytic peptide gamma</molecule>
    <text evidence="2">Membrane-permeabilizing peptide produced by virus maturation, thereby creating the infectious virion. After endocytosis into the host cell, peptide gamma is probably exposed in endosomes, where it permeabilizes the endosomal membrane, facilitating translocation of viral capsid or RNA into the cytoplasm. Involved in specific recognition and packaging of viral RNA during assembly.</text>
</comment>
<comment type="catalytic activity">
    <molecule>Capsid protein beta</molecule>
    <reaction evidence="2">
        <text>Hydrolysis of an asparaginyl bond involved in the maturation of the structural protein of the virus, typically -Asn-|-Ala- or -Asn-|-Phe-.</text>
        <dbReference type="EC" id="3.4.23.44"/>
    </reaction>
</comment>
<comment type="subcellular location">
    <molecule>Capsid protein alpha</molecule>
    <subcellularLocation>
        <location evidence="4">Virion</location>
    </subcellularLocation>
</comment>
<comment type="subcellular location">
    <molecule>Capsid protein beta</molecule>
    <subcellularLocation>
        <location evidence="4">Virion</location>
    </subcellularLocation>
</comment>
<comment type="subcellular location">
    <molecule>Membrane-lytic peptide gamma</molecule>
    <subcellularLocation>
        <location evidence="4">Virion</location>
    </subcellularLocation>
    <text evidence="4">Located inside the capsid and probably externalized in early endosomes.</text>
</comment>
<comment type="PTM">
    <molecule>Capsid protein alpha</molecule>
    <text evidence="2">Capsid protein alpha autocatalytically maturates into capsid protein beta and peptide gamma.</text>
</comment>
<comment type="similarity">
    <text evidence="4">Belongs to the peptidase A6 family.</text>
</comment>
<comment type="online information" name="Virus Particle ExploreR db">
    <link uri="https://viperdb.org/Info_Page.php?VDB=2bbv"/>
    <text>Icosahedral capsid structure</text>
</comment>
<feature type="chain" id="PRO_0000402386" description="Capsid protein alpha">
    <location>
        <begin position="1"/>
        <end position="407"/>
    </location>
</feature>
<feature type="chain" id="PRO_0000039190" description="Capsid protein beta">
    <location>
        <begin position="1"/>
        <end position="363"/>
    </location>
</feature>
<feature type="chain" id="PRO_0000039191" description="Membrane-lytic peptide gamma">
    <location>
        <begin position="364"/>
        <end position="407"/>
    </location>
</feature>
<feature type="region of interest" description="Disordered" evidence="3">
    <location>
        <begin position="1"/>
        <end position="50"/>
    </location>
</feature>
<feature type="compositionally biased region" description="Basic residues" evidence="3">
    <location>
        <begin position="1"/>
        <end position="12"/>
    </location>
</feature>
<feature type="compositionally biased region" description="Low complexity" evidence="3">
    <location>
        <begin position="13"/>
        <end position="32"/>
    </location>
</feature>
<feature type="compositionally biased region" description="Basic residues" evidence="3">
    <location>
        <begin position="33"/>
        <end position="48"/>
    </location>
</feature>
<feature type="active site" evidence="2">
    <location>
        <position position="75"/>
    </location>
</feature>
<feature type="binding site" evidence="2">
    <location>
        <position position="161"/>
    </location>
    <ligand>
        <name>Ca(2+)</name>
        <dbReference type="ChEBI" id="CHEBI:29108"/>
        <label>1</label>
    </ligand>
</feature>
<feature type="binding site" evidence="2">
    <location>
        <position position="161"/>
    </location>
    <ligand>
        <name>Ca(2+)</name>
        <dbReference type="ChEBI" id="CHEBI:29108"/>
        <label>2</label>
    </ligand>
</feature>
<feature type="binding site" evidence="2">
    <location>
        <position position="161"/>
    </location>
    <ligand>
        <name>Ca(2+)</name>
        <dbReference type="ChEBI" id="CHEBI:29108"/>
        <label>3</label>
    </ligand>
</feature>
<feature type="binding site" evidence="2">
    <location>
        <position position="221"/>
    </location>
    <ligand>
        <name>Ca(2+)</name>
        <dbReference type="ChEBI" id="CHEBI:29108"/>
        <label>2</label>
    </ligand>
</feature>
<feature type="binding site" evidence="2">
    <location>
        <position position="221"/>
    </location>
    <ligand>
        <name>Ca(2+)</name>
        <dbReference type="ChEBI" id="CHEBI:29108"/>
        <label>3</label>
    </ligand>
</feature>
<feature type="binding site" evidence="2">
    <location>
        <position position="221"/>
    </location>
    <ligand>
        <name>Ca(2+)</name>
        <dbReference type="ChEBI" id="CHEBI:29108"/>
        <label>4</label>
    </ligand>
</feature>
<feature type="binding site" evidence="2">
    <location>
        <position position="249"/>
    </location>
    <ligand>
        <name>Ca(2+)</name>
        <dbReference type="ChEBI" id="CHEBI:29108"/>
        <label>5</label>
    </ligand>
</feature>
<feature type="binding site" evidence="2">
    <location>
        <position position="251"/>
    </location>
    <ligand>
        <name>Ca(2+)</name>
        <dbReference type="ChEBI" id="CHEBI:29108"/>
        <label>5</label>
    </ligand>
</feature>
<feature type="binding site" evidence="2">
    <location>
        <position position="273"/>
    </location>
    <ligand>
        <name>Ca(2+)</name>
        <dbReference type="ChEBI" id="CHEBI:29108"/>
        <label>2</label>
    </ligand>
</feature>
<feature type="binding site" evidence="2">
    <location>
        <position position="273"/>
    </location>
    <ligand>
        <name>Ca(2+)</name>
        <dbReference type="ChEBI" id="CHEBI:29108"/>
        <label>4</label>
    </ligand>
</feature>
<feature type="site" description="Cleavage; by autolysis" evidence="2">
    <location>
        <begin position="363"/>
        <end position="364"/>
    </location>
</feature>
<feature type="disulfide bond" evidence="1">
    <location>
        <begin position="69"/>
        <end position="318"/>
    </location>
</feature>
<feature type="helix" evidence="5">
    <location>
        <begin position="61"/>
        <end position="71"/>
    </location>
</feature>
<feature type="helix" evidence="5">
    <location>
        <begin position="73"/>
        <end position="75"/>
    </location>
</feature>
<feature type="strand" evidence="5">
    <location>
        <begin position="76"/>
        <end position="78"/>
    </location>
</feature>
<feature type="strand" evidence="5">
    <location>
        <begin position="90"/>
        <end position="105"/>
    </location>
</feature>
<feature type="strand" evidence="5">
    <location>
        <begin position="109"/>
        <end position="115"/>
    </location>
</feature>
<feature type="strand" evidence="5">
    <location>
        <begin position="121"/>
        <end position="129"/>
    </location>
</feature>
<feature type="strand" evidence="5">
    <location>
        <begin position="139"/>
        <end position="144"/>
    </location>
</feature>
<feature type="helix" evidence="5">
    <location>
        <begin position="148"/>
        <end position="152"/>
    </location>
</feature>
<feature type="turn" evidence="5">
    <location>
        <begin position="160"/>
        <end position="162"/>
    </location>
</feature>
<feature type="strand" evidence="5">
    <location>
        <begin position="163"/>
        <end position="169"/>
    </location>
</feature>
<feature type="strand" evidence="5">
    <location>
        <begin position="172"/>
        <end position="177"/>
    </location>
</feature>
<feature type="turn" evidence="5">
    <location>
        <begin position="181"/>
        <end position="183"/>
    </location>
</feature>
<feature type="strand" evidence="5">
    <location>
        <begin position="187"/>
        <end position="193"/>
    </location>
</feature>
<feature type="strand" evidence="5">
    <location>
        <begin position="196"/>
        <end position="203"/>
    </location>
</feature>
<feature type="strand" evidence="5">
    <location>
        <begin position="211"/>
        <end position="219"/>
    </location>
</feature>
<feature type="helix" evidence="5">
    <location>
        <begin position="220"/>
        <end position="224"/>
    </location>
</feature>
<feature type="strand" evidence="5">
    <location>
        <begin position="231"/>
        <end position="234"/>
    </location>
</feature>
<feature type="helix" evidence="5">
    <location>
        <begin position="235"/>
        <end position="237"/>
    </location>
</feature>
<feature type="strand" evidence="5">
    <location>
        <begin position="239"/>
        <end position="242"/>
    </location>
</feature>
<feature type="strand" evidence="5">
    <location>
        <begin position="247"/>
        <end position="249"/>
    </location>
</feature>
<feature type="strand" evidence="5">
    <location>
        <begin position="260"/>
        <end position="263"/>
    </location>
</feature>
<feature type="helix" evidence="5">
    <location>
        <begin position="269"/>
        <end position="272"/>
    </location>
</feature>
<feature type="strand" evidence="5">
    <location>
        <begin position="275"/>
        <end position="279"/>
    </location>
</feature>
<feature type="turn" evidence="5">
    <location>
        <begin position="283"/>
        <end position="285"/>
    </location>
</feature>
<feature type="strand" evidence="5">
    <location>
        <begin position="296"/>
        <end position="303"/>
    </location>
</feature>
<feature type="strand" evidence="5">
    <location>
        <begin position="309"/>
        <end position="323"/>
    </location>
</feature>
<feature type="strand" evidence="5">
    <location>
        <begin position="327"/>
        <end position="329"/>
    </location>
</feature>
<feature type="helix" evidence="5">
    <location>
        <begin position="330"/>
        <end position="332"/>
    </location>
</feature>
<feature type="helix" evidence="5">
    <location>
        <begin position="341"/>
        <end position="352"/>
    </location>
</feature>
<feature type="helix" evidence="5">
    <location>
        <begin position="360"/>
        <end position="362"/>
    </location>
</feature>
<feature type="helix" evidence="5">
    <location>
        <begin position="367"/>
        <end position="376"/>
    </location>
</feature>
<proteinExistence type="evidence at protein level"/>